<sequence>MKKEAKSQVVSEMAQKLASCQAAFLADYRGLTVEQVNQLRGELKKVGVEYRVVKNTLLRLASKGTDAECLSEYLQGPNAIALAEEDPVGPAKVLTQFAKSNKAFELRAAELNGKLLSIDEVKALAELPSKEELLGKMLGSINAPVSNFVGVLAAVPRTFVQVLAAIQQQKEG</sequence>
<organism>
    <name type="scientific">Syntrophotalea carbinolica (strain DSM 2380 / NBRC 103641 / GraBd1)</name>
    <name type="common">Pelobacter carbinolicus</name>
    <dbReference type="NCBI Taxonomy" id="338963"/>
    <lineage>
        <taxon>Bacteria</taxon>
        <taxon>Pseudomonadati</taxon>
        <taxon>Thermodesulfobacteriota</taxon>
        <taxon>Desulfuromonadia</taxon>
        <taxon>Desulfuromonadales</taxon>
        <taxon>Syntrophotaleaceae</taxon>
        <taxon>Syntrophotalea</taxon>
    </lineage>
</organism>
<proteinExistence type="inferred from homology"/>
<reference key="1">
    <citation type="submission" date="2005-10" db="EMBL/GenBank/DDBJ databases">
        <title>Complete sequence of Pelobacter carbinolicus DSM 2380.</title>
        <authorList>
            <person name="Copeland A."/>
            <person name="Lucas S."/>
            <person name="Lapidus A."/>
            <person name="Barry K."/>
            <person name="Detter J.C."/>
            <person name="Glavina T."/>
            <person name="Hammon N."/>
            <person name="Israni S."/>
            <person name="Pitluck S."/>
            <person name="Chertkov O."/>
            <person name="Schmutz J."/>
            <person name="Larimer F."/>
            <person name="Land M."/>
            <person name="Kyrpides N."/>
            <person name="Ivanova N."/>
            <person name="Richardson P."/>
        </authorList>
    </citation>
    <scope>NUCLEOTIDE SEQUENCE [LARGE SCALE GENOMIC DNA]</scope>
    <source>
        <strain>DSM 2380 / NBRC 103641 / GraBd1</strain>
    </source>
</reference>
<evidence type="ECO:0000255" key="1">
    <source>
        <dbReference type="HAMAP-Rule" id="MF_00362"/>
    </source>
</evidence>
<evidence type="ECO:0000305" key="2"/>
<protein>
    <recommendedName>
        <fullName evidence="1">Large ribosomal subunit protein uL10</fullName>
    </recommendedName>
    <alternativeName>
        <fullName evidence="2">50S ribosomal protein L10</fullName>
    </alternativeName>
</protein>
<keyword id="KW-1185">Reference proteome</keyword>
<keyword id="KW-0687">Ribonucleoprotein</keyword>
<keyword id="KW-0689">Ribosomal protein</keyword>
<keyword id="KW-0694">RNA-binding</keyword>
<keyword id="KW-0699">rRNA-binding</keyword>
<name>RL10_SYNC1</name>
<dbReference type="EMBL" id="CP000142">
    <property type="protein sequence ID" value="ABA87951.1"/>
    <property type="molecule type" value="Genomic_DNA"/>
</dbReference>
<dbReference type="RefSeq" id="WP_011340394.1">
    <property type="nucleotide sequence ID" value="NC_007498.2"/>
</dbReference>
<dbReference type="SMR" id="Q3A6Q6"/>
<dbReference type="STRING" id="338963.Pcar_0692"/>
<dbReference type="KEGG" id="pca:Pcar_0692"/>
<dbReference type="eggNOG" id="COG0244">
    <property type="taxonomic scope" value="Bacteria"/>
</dbReference>
<dbReference type="HOGENOM" id="CLU_092227_0_0_7"/>
<dbReference type="OrthoDB" id="3186107at2"/>
<dbReference type="Proteomes" id="UP000002534">
    <property type="component" value="Chromosome"/>
</dbReference>
<dbReference type="GO" id="GO:0015934">
    <property type="term" value="C:large ribosomal subunit"/>
    <property type="evidence" value="ECO:0007669"/>
    <property type="project" value="InterPro"/>
</dbReference>
<dbReference type="GO" id="GO:0070180">
    <property type="term" value="F:large ribosomal subunit rRNA binding"/>
    <property type="evidence" value="ECO:0007669"/>
    <property type="project" value="UniProtKB-UniRule"/>
</dbReference>
<dbReference type="GO" id="GO:0003735">
    <property type="term" value="F:structural constituent of ribosome"/>
    <property type="evidence" value="ECO:0007669"/>
    <property type="project" value="InterPro"/>
</dbReference>
<dbReference type="GO" id="GO:0006412">
    <property type="term" value="P:translation"/>
    <property type="evidence" value="ECO:0007669"/>
    <property type="project" value="UniProtKB-UniRule"/>
</dbReference>
<dbReference type="CDD" id="cd05797">
    <property type="entry name" value="Ribosomal_L10"/>
    <property type="match status" value="1"/>
</dbReference>
<dbReference type="Gene3D" id="3.30.70.1730">
    <property type="match status" value="1"/>
</dbReference>
<dbReference type="Gene3D" id="6.10.250.290">
    <property type="match status" value="1"/>
</dbReference>
<dbReference type="HAMAP" id="MF_00362">
    <property type="entry name" value="Ribosomal_uL10"/>
    <property type="match status" value="1"/>
</dbReference>
<dbReference type="InterPro" id="IPR001790">
    <property type="entry name" value="Ribosomal_uL10"/>
</dbReference>
<dbReference type="InterPro" id="IPR043141">
    <property type="entry name" value="Ribosomal_uL10-like_sf"/>
</dbReference>
<dbReference type="InterPro" id="IPR022973">
    <property type="entry name" value="Ribosomal_uL10_bac"/>
</dbReference>
<dbReference type="InterPro" id="IPR047865">
    <property type="entry name" value="Ribosomal_uL10_bac_type"/>
</dbReference>
<dbReference type="InterPro" id="IPR002363">
    <property type="entry name" value="Ribosomal_uL10_CS_bac"/>
</dbReference>
<dbReference type="NCBIfam" id="NF000955">
    <property type="entry name" value="PRK00099.1-1"/>
    <property type="match status" value="1"/>
</dbReference>
<dbReference type="PANTHER" id="PTHR11560">
    <property type="entry name" value="39S RIBOSOMAL PROTEIN L10, MITOCHONDRIAL"/>
    <property type="match status" value="1"/>
</dbReference>
<dbReference type="Pfam" id="PF00466">
    <property type="entry name" value="Ribosomal_L10"/>
    <property type="match status" value="1"/>
</dbReference>
<dbReference type="SUPFAM" id="SSF160369">
    <property type="entry name" value="Ribosomal protein L10-like"/>
    <property type="match status" value="1"/>
</dbReference>
<dbReference type="PROSITE" id="PS01109">
    <property type="entry name" value="RIBOSOMAL_L10"/>
    <property type="match status" value="1"/>
</dbReference>
<comment type="function">
    <text evidence="1">Forms part of the ribosomal stalk, playing a central role in the interaction of the ribosome with GTP-bound translation factors.</text>
</comment>
<comment type="subunit">
    <text evidence="1">Part of the ribosomal stalk of the 50S ribosomal subunit. The N-terminus interacts with L11 and the large rRNA to form the base of the stalk. The C-terminus forms an elongated spine to which L12 dimers bind in a sequential fashion forming a multimeric L10(L12)X complex.</text>
</comment>
<comment type="similarity">
    <text evidence="1">Belongs to the universal ribosomal protein uL10 family.</text>
</comment>
<accession>Q3A6Q6</accession>
<feature type="chain" id="PRO_0000234868" description="Large ribosomal subunit protein uL10">
    <location>
        <begin position="1"/>
        <end position="172"/>
    </location>
</feature>
<gene>
    <name evidence="1" type="primary">rplJ</name>
    <name type="ordered locus">Pcar_0692</name>
</gene>